<comment type="function">
    <text evidence="1">Forms a chaperone-bound H2A.Z-H2B complex that acts as a source for SWR1 complex-dependent H2A to H2A.Z histone replacement in chromatin.</text>
</comment>
<comment type="subunit">
    <text evidence="1">Forms a heterotrimer with H2A.Z-H2B, stabilizing the association of the histone dimer. Also, with a lower affinity, forms a heterotrimer with H2A-H2B (By similarity).</text>
</comment>
<comment type="subcellular location">
    <subcellularLocation>
        <location evidence="1">Nucleus</location>
    </subcellularLocation>
</comment>
<comment type="similarity">
    <text evidence="3">Belongs to the CHZ1 family.</text>
</comment>
<feature type="chain" id="PRO_0000330213" description="Histone H2A.Z-specific chaperone CHZ1">
    <location>
        <begin position="1"/>
        <end position="200"/>
    </location>
</feature>
<feature type="region of interest" description="Disordered" evidence="2">
    <location>
        <begin position="1"/>
        <end position="200"/>
    </location>
</feature>
<feature type="compositionally biased region" description="Basic and acidic residues" evidence="2">
    <location>
        <begin position="1"/>
        <end position="13"/>
    </location>
</feature>
<feature type="compositionally biased region" description="Polar residues" evidence="2">
    <location>
        <begin position="25"/>
        <end position="41"/>
    </location>
</feature>
<feature type="compositionally biased region" description="Basic and acidic residues" evidence="2">
    <location>
        <begin position="42"/>
        <end position="61"/>
    </location>
</feature>
<feature type="compositionally biased region" description="Basic and acidic residues" evidence="2">
    <location>
        <begin position="78"/>
        <end position="101"/>
    </location>
</feature>
<feature type="compositionally biased region" description="Acidic residues" evidence="2">
    <location>
        <begin position="102"/>
        <end position="139"/>
    </location>
</feature>
<feature type="compositionally biased region" description="Acidic residues" evidence="2">
    <location>
        <begin position="146"/>
        <end position="158"/>
    </location>
</feature>
<feature type="compositionally biased region" description="Polar residues" evidence="2">
    <location>
        <begin position="159"/>
        <end position="168"/>
    </location>
</feature>
<feature type="compositionally biased region" description="Basic and acidic residues" evidence="2">
    <location>
        <begin position="174"/>
        <end position="190"/>
    </location>
</feature>
<feature type="compositionally biased region" description="Acidic residues" evidence="2">
    <location>
        <begin position="191"/>
        <end position="200"/>
    </location>
</feature>
<dbReference type="EMBL" id="CH981527">
    <property type="protein sequence ID" value="EDK45153.1"/>
    <property type="molecule type" value="Genomic_DNA"/>
</dbReference>
<dbReference type="RefSeq" id="XP_001525404.1">
    <property type="nucleotide sequence ID" value="XM_001525354.1"/>
</dbReference>
<dbReference type="SMR" id="A5E145"/>
<dbReference type="STRING" id="379508.A5E145"/>
<dbReference type="GeneID" id="5232560"/>
<dbReference type="KEGG" id="lel:PVL30_002830"/>
<dbReference type="VEuPathDB" id="FungiDB:LELG_03332"/>
<dbReference type="eggNOG" id="ENOG502SCUM">
    <property type="taxonomic scope" value="Eukaryota"/>
</dbReference>
<dbReference type="HOGENOM" id="CLU_1366461_0_0_1"/>
<dbReference type="InParanoid" id="A5E145"/>
<dbReference type="OMA" id="QTACHFR"/>
<dbReference type="OrthoDB" id="4026636at2759"/>
<dbReference type="Proteomes" id="UP000001996">
    <property type="component" value="Unassembled WGS sequence"/>
</dbReference>
<dbReference type="GO" id="GO:0005634">
    <property type="term" value="C:nucleus"/>
    <property type="evidence" value="ECO:0007669"/>
    <property type="project" value="UniProtKB-SubCell"/>
</dbReference>
<dbReference type="InterPro" id="IPR019098">
    <property type="entry name" value="Histone_chaperone_domain_CHZ"/>
</dbReference>
<dbReference type="Pfam" id="PF09649">
    <property type="entry name" value="CHZ"/>
    <property type="match status" value="1"/>
</dbReference>
<dbReference type="SMART" id="SM01082">
    <property type="entry name" value="CHZ"/>
    <property type="match status" value="1"/>
</dbReference>
<protein>
    <recommendedName>
        <fullName>Histone H2A.Z-specific chaperone CHZ1</fullName>
    </recommendedName>
</protein>
<proteinExistence type="inferred from homology"/>
<gene>
    <name type="primary">CHZ1</name>
    <name type="ORF">LELG_03332</name>
</gene>
<keyword id="KW-0143">Chaperone</keyword>
<keyword id="KW-0539">Nucleus</keyword>
<keyword id="KW-1185">Reference proteome</keyword>
<organism>
    <name type="scientific">Lodderomyces elongisporus (strain ATCC 11503 / CBS 2605 / JCM 1781 / NBRC 1676 / NRRL YB-4239)</name>
    <name type="common">Yeast</name>
    <name type="synonym">Saccharomyces elongisporus</name>
    <dbReference type="NCBI Taxonomy" id="379508"/>
    <lineage>
        <taxon>Eukaryota</taxon>
        <taxon>Fungi</taxon>
        <taxon>Dikarya</taxon>
        <taxon>Ascomycota</taxon>
        <taxon>Saccharomycotina</taxon>
        <taxon>Pichiomycetes</taxon>
        <taxon>Debaryomycetaceae</taxon>
        <taxon>Candida/Lodderomyces clade</taxon>
        <taxon>Lodderomyces</taxon>
    </lineage>
</organism>
<reference key="1">
    <citation type="journal article" date="2009" name="Nature">
        <title>Evolution of pathogenicity and sexual reproduction in eight Candida genomes.</title>
        <authorList>
            <person name="Butler G."/>
            <person name="Rasmussen M.D."/>
            <person name="Lin M.F."/>
            <person name="Santos M.A.S."/>
            <person name="Sakthikumar S."/>
            <person name="Munro C.A."/>
            <person name="Rheinbay E."/>
            <person name="Grabherr M."/>
            <person name="Forche A."/>
            <person name="Reedy J.L."/>
            <person name="Agrafioti I."/>
            <person name="Arnaud M.B."/>
            <person name="Bates S."/>
            <person name="Brown A.J.P."/>
            <person name="Brunke S."/>
            <person name="Costanzo M.C."/>
            <person name="Fitzpatrick D.A."/>
            <person name="de Groot P.W.J."/>
            <person name="Harris D."/>
            <person name="Hoyer L.L."/>
            <person name="Hube B."/>
            <person name="Klis F.M."/>
            <person name="Kodira C."/>
            <person name="Lennard N."/>
            <person name="Logue M.E."/>
            <person name="Martin R."/>
            <person name="Neiman A.M."/>
            <person name="Nikolaou E."/>
            <person name="Quail M.A."/>
            <person name="Quinn J."/>
            <person name="Santos M.C."/>
            <person name="Schmitzberger F.F."/>
            <person name="Sherlock G."/>
            <person name="Shah P."/>
            <person name="Silverstein K.A.T."/>
            <person name="Skrzypek M.S."/>
            <person name="Soll D."/>
            <person name="Staggs R."/>
            <person name="Stansfield I."/>
            <person name="Stumpf M.P.H."/>
            <person name="Sudbery P.E."/>
            <person name="Srikantha T."/>
            <person name="Zeng Q."/>
            <person name="Berman J."/>
            <person name="Berriman M."/>
            <person name="Heitman J."/>
            <person name="Gow N.A.R."/>
            <person name="Lorenz M.C."/>
            <person name="Birren B.W."/>
            <person name="Kellis M."/>
            <person name="Cuomo C.A."/>
        </authorList>
    </citation>
    <scope>NUCLEOTIDE SEQUENCE [LARGE SCALE GENOMIC DNA]</scope>
    <source>
        <strain>ATCC 11503 / BCRC 21390 / CBS 2605 / JCM 1781 / NBRC 1676 / NRRL YB-4239</strain>
    </source>
</reference>
<sequence>MSEREVKQIHEDQEAANAPAGLAQENAQVEETANENGSEDVSSAKKRDPEEDVTKADEPDKKKKKKRRTYDDDDDKEEKDGEEVKGKEAAKEKDSEGKEKVDADDDDEDEEDEEAEVVLGEDDEDDDDDDDEDDDEEYDESRADVGEEDDEEEDELNEIDQSNIISSGRRTRGKQIDFNEAAEKLDRENGLLEEDGEEEN</sequence>
<accession>A5E145</accession>
<evidence type="ECO:0000250" key="1"/>
<evidence type="ECO:0000256" key="2">
    <source>
        <dbReference type="SAM" id="MobiDB-lite"/>
    </source>
</evidence>
<evidence type="ECO:0000305" key="3"/>
<name>CHZ1_LODEL</name>